<accession>Q0HNS9</accession>
<sequence length="63" mass="7170">MKASELREKSVEELNAELLGLLREQFNLRMQHATGQLTQTHQLKLVRRNIARVKTIITSKAGA</sequence>
<evidence type="ECO:0000255" key="1">
    <source>
        <dbReference type="HAMAP-Rule" id="MF_00374"/>
    </source>
</evidence>
<evidence type="ECO:0000305" key="2"/>
<organism>
    <name type="scientific">Shewanella sp. (strain MR-4)</name>
    <dbReference type="NCBI Taxonomy" id="60480"/>
    <lineage>
        <taxon>Bacteria</taxon>
        <taxon>Pseudomonadati</taxon>
        <taxon>Pseudomonadota</taxon>
        <taxon>Gammaproteobacteria</taxon>
        <taxon>Alteromonadales</taxon>
        <taxon>Shewanellaceae</taxon>
        <taxon>Shewanella</taxon>
    </lineage>
</organism>
<proteinExistence type="inferred from homology"/>
<dbReference type="EMBL" id="CP000446">
    <property type="protein sequence ID" value="ABI37288.1"/>
    <property type="molecule type" value="Genomic_DNA"/>
</dbReference>
<dbReference type="RefSeq" id="WP_007644429.1">
    <property type="nucleotide sequence ID" value="NC_008321.1"/>
</dbReference>
<dbReference type="SMR" id="Q0HNS9"/>
<dbReference type="GeneID" id="94726194"/>
<dbReference type="KEGG" id="she:Shewmr4_0207"/>
<dbReference type="HOGENOM" id="CLU_158491_1_2_6"/>
<dbReference type="GO" id="GO:0022625">
    <property type="term" value="C:cytosolic large ribosomal subunit"/>
    <property type="evidence" value="ECO:0007669"/>
    <property type="project" value="TreeGrafter"/>
</dbReference>
<dbReference type="GO" id="GO:0003735">
    <property type="term" value="F:structural constituent of ribosome"/>
    <property type="evidence" value="ECO:0007669"/>
    <property type="project" value="InterPro"/>
</dbReference>
<dbReference type="GO" id="GO:0006412">
    <property type="term" value="P:translation"/>
    <property type="evidence" value="ECO:0007669"/>
    <property type="project" value="UniProtKB-UniRule"/>
</dbReference>
<dbReference type="CDD" id="cd00427">
    <property type="entry name" value="Ribosomal_L29_HIP"/>
    <property type="match status" value="1"/>
</dbReference>
<dbReference type="FunFam" id="1.10.287.310:FF:000001">
    <property type="entry name" value="50S ribosomal protein L29"/>
    <property type="match status" value="1"/>
</dbReference>
<dbReference type="Gene3D" id="1.10.287.310">
    <property type="match status" value="1"/>
</dbReference>
<dbReference type="HAMAP" id="MF_00374">
    <property type="entry name" value="Ribosomal_uL29"/>
    <property type="match status" value="1"/>
</dbReference>
<dbReference type="InterPro" id="IPR050063">
    <property type="entry name" value="Ribosomal_protein_uL29"/>
</dbReference>
<dbReference type="InterPro" id="IPR001854">
    <property type="entry name" value="Ribosomal_uL29"/>
</dbReference>
<dbReference type="InterPro" id="IPR018254">
    <property type="entry name" value="Ribosomal_uL29_CS"/>
</dbReference>
<dbReference type="InterPro" id="IPR036049">
    <property type="entry name" value="Ribosomal_uL29_sf"/>
</dbReference>
<dbReference type="NCBIfam" id="TIGR00012">
    <property type="entry name" value="L29"/>
    <property type="match status" value="1"/>
</dbReference>
<dbReference type="PANTHER" id="PTHR10916">
    <property type="entry name" value="60S RIBOSOMAL PROTEIN L35/50S RIBOSOMAL PROTEIN L29"/>
    <property type="match status" value="1"/>
</dbReference>
<dbReference type="PANTHER" id="PTHR10916:SF0">
    <property type="entry name" value="LARGE RIBOSOMAL SUBUNIT PROTEIN UL29C"/>
    <property type="match status" value="1"/>
</dbReference>
<dbReference type="Pfam" id="PF00831">
    <property type="entry name" value="Ribosomal_L29"/>
    <property type="match status" value="1"/>
</dbReference>
<dbReference type="SUPFAM" id="SSF46561">
    <property type="entry name" value="Ribosomal protein L29 (L29p)"/>
    <property type="match status" value="1"/>
</dbReference>
<dbReference type="PROSITE" id="PS00579">
    <property type="entry name" value="RIBOSOMAL_L29"/>
    <property type="match status" value="1"/>
</dbReference>
<protein>
    <recommendedName>
        <fullName evidence="1">Large ribosomal subunit protein uL29</fullName>
    </recommendedName>
    <alternativeName>
        <fullName evidence="2">50S ribosomal protein L29</fullName>
    </alternativeName>
</protein>
<keyword id="KW-0687">Ribonucleoprotein</keyword>
<keyword id="KW-0689">Ribosomal protein</keyword>
<reference key="1">
    <citation type="submission" date="2006-08" db="EMBL/GenBank/DDBJ databases">
        <title>Complete sequence of Shewanella sp. MR-4.</title>
        <authorList>
            <consortium name="US DOE Joint Genome Institute"/>
            <person name="Copeland A."/>
            <person name="Lucas S."/>
            <person name="Lapidus A."/>
            <person name="Barry K."/>
            <person name="Detter J.C."/>
            <person name="Glavina del Rio T."/>
            <person name="Hammon N."/>
            <person name="Israni S."/>
            <person name="Dalin E."/>
            <person name="Tice H."/>
            <person name="Pitluck S."/>
            <person name="Kiss H."/>
            <person name="Brettin T."/>
            <person name="Bruce D."/>
            <person name="Han C."/>
            <person name="Tapia R."/>
            <person name="Gilna P."/>
            <person name="Schmutz J."/>
            <person name="Larimer F."/>
            <person name="Land M."/>
            <person name="Hauser L."/>
            <person name="Kyrpides N."/>
            <person name="Mikhailova N."/>
            <person name="Nealson K."/>
            <person name="Konstantinidis K."/>
            <person name="Klappenbach J."/>
            <person name="Tiedje J."/>
            <person name="Richardson P."/>
        </authorList>
    </citation>
    <scope>NUCLEOTIDE SEQUENCE [LARGE SCALE GENOMIC DNA]</scope>
    <source>
        <strain>MR-4</strain>
    </source>
</reference>
<comment type="similarity">
    <text evidence="1">Belongs to the universal ribosomal protein uL29 family.</text>
</comment>
<gene>
    <name evidence="1" type="primary">rpmC</name>
    <name type="ordered locus">Shewmr4_0207</name>
</gene>
<feature type="chain" id="PRO_1000007603" description="Large ribosomal subunit protein uL29">
    <location>
        <begin position="1"/>
        <end position="63"/>
    </location>
</feature>
<name>RL29_SHESM</name>